<sequence length="136" mass="15441">MSALVYFSSSSENTHRFMQRLGLPATRIPLNERERIRVDEPYILVVPSYGGGGMAGAVPRQVIRFLNDEHNRARIRGVIASGNRNFGDAWGCAGDVIAQKYGVPWLYRFELMGTQRDIDNVRRGVNEFWQQLPRSA</sequence>
<dbReference type="EMBL" id="CP000026">
    <property type="protein sequence ID" value="AAV78528.1"/>
    <property type="molecule type" value="Genomic_DNA"/>
</dbReference>
<dbReference type="RefSeq" id="WP_001275411.1">
    <property type="nucleotide sequence ID" value="NC_006511.1"/>
</dbReference>
<dbReference type="SMR" id="Q5PF04"/>
<dbReference type="KEGG" id="spt:SPA2664"/>
<dbReference type="HOGENOM" id="CLU_114845_0_0_6"/>
<dbReference type="Proteomes" id="UP000008185">
    <property type="component" value="Chromosome"/>
</dbReference>
<dbReference type="GO" id="GO:0010181">
    <property type="term" value="F:FMN binding"/>
    <property type="evidence" value="ECO:0007669"/>
    <property type="project" value="InterPro"/>
</dbReference>
<dbReference type="GO" id="GO:0036211">
    <property type="term" value="P:protein modification process"/>
    <property type="evidence" value="ECO:0007669"/>
    <property type="project" value="InterPro"/>
</dbReference>
<dbReference type="FunFam" id="3.40.50.360:FF:000005">
    <property type="entry name" value="Protein NrdI"/>
    <property type="match status" value="1"/>
</dbReference>
<dbReference type="Gene3D" id="3.40.50.360">
    <property type="match status" value="1"/>
</dbReference>
<dbReference type="HAMAP" id="MF_00128">
    <property type="entry name" value="NrdI"/>
    <property type="match status" value="1"/>
</dbReference>
<dbReference type="InterPro" id="IPR029039">
    <property type="entry name" value="Flavoprotein-like_sf"/>
</dbReference>
<dbReference type="InterPro" id="IPR020852">
    <property type="entry name" value="RNR_Ib_NrdI_bac"/>
</dbReference>
<dbReference type="InterPro" id="IPR004465">
    <property type="entry name" value="RNR_NrdI"/>
</dbReference>
<dbReference type="NCBIfam" id="TIGR00333">
    <property type="entry name" value="nrdI"/>
    <property type="match status" value="1"/>
</dbReference>
<dbReference type="PANTHER" id="PTHR37297">
    <property type="entry name" value="PROTEIN NRDI"/>
    <property type="match status" value="1"/>
</dbReference>
<dbReference type="PANTHER" id="PTHR37297:SF1">
    <property type="entry name" value="PROTEIN NRDI"/>
    <property type="match status" value="1"/>
</dbReference>
<dbReference type="Pfam" id="PF07972">
    <property type="entry name" value="Flavodoxin_NdrI"/>
    <property type="match status" value="1"/>
</dbReference>
<dbReference type="PIRSF" id="PIRSF005087">
    <property type="entry name" value="NrdI"/>
    <property type="match status" value="1"/>
</dbReference>
<dbReference type="SUPFAM" id="SSF52218">
    <property type="entry name" value="Flavoproteins"/>
    <property type="match status" value="1"/>
</dbReference>
<comment type="function">
    <text evidence="1">Probably involved in ribonucleotide reductase function.</text>
</comment>
<comment type="similarity">
    <text evidence="1">Belongs to the NrdI family.</text>
</comment>
<organism>
    <name type="scientific">Salmonella paratyphi A (strain ATCC 9150 / SARB42)</name>
    <dbReference type="NCBI Taxonomy" id="295319"/>
    <lineage>
        <taxon>Bacteria</taxon>
        <taxon>Pseudomonadati</taxon>
        <taxon>Pseudomonadota</taxon>
        <taxon>Gammaproteobacteria</taxon>
        <taxon>Enterobacterales</taxon>
        <taxon>Enterobacteriaceae</taxon>
        <taxon>Salmonella</taxon>
    </lineage>
</organism>
<accession>Q5PF04</accession>
<reference key="1">
    <citation type="journal article" date="2004" name="Nat. Genet.">
        <title>Comparison of genome degradation in Paratyphi A and Typhi, human-restricted serovars of Salmonella enterica that cause typhoid.</title>
        <authorList>
            <person name="McClelland M."/>
            <person name="Sanderson K.E."/>
            <person name="Clifton S.W."/>
            <person name="Latreille P."/>
            <person name="Porwollik S."/>
            <person name="Sabo A."/>
            <person name="Meyer R."/>
            <person name="Bieri T."/>
            <person name="Ozersky P."/>
            <person name="McLellan M."/>
            <person name="Harkins C.R."/>
            <person name="Wang C."/>
            <person name="Nguyen C."/>
            <person name="Berghoff A."/>
            <person name="Elliott G."/>
            <person name="Kohlberg S."/>
            <person name="Strong C."/>
            <person name="Du F."/>
            <person name="Carter J."/>
            <person name="Kremizki C."/>
            <person name="Layman D."/>
            <person name="Leonard S."/>
            <person name="Sun H."/>
            <person name="Fulton L."/>
            <person name="Nash W."/>
            <person name="Miner T."/>
            <person name="Minx P."/>
            <person name="Delehaunty K."/>
            <person name="Fronick C."/>
            <person name="Magrini V."/>
            <person name="Nhan M."/>
            <person name="Warren W."/>
            <person name="Florea L."/>
            <person name="Spieth J."/>
            <person name="Wilson R.K."/>
        </authorList>
    </citation>
    <scope>NUCLEOTIDE SEQUENCE [LARGE SCALE GENOMIC DNA]</scope>
    <source>
        <strain>ATCC 9150 / SARB42</strain>
    </source>
</reference>
<gene>
    <name evidence="1" type="primary">nrdI</name>
    <name type="ordered locus">SPA2664</name>
</gene>
<evidence type="ECO:0000255" key="1">
    <source>
        <dbReference type="HAMAP-Rule" id="MF_00128"/>
    </source>
</evidence>
<protein>
    <recommendedName>
        <fullName evidence="1">Protein NrdI</fullName>
    </recommendedName>
</protein>
<proteinExistence type="inferred from homology"/>
<name>NRDI_SALPA</name>
<feature type="chain" id="PRO_0000164330" description="Protein NrdI">
    <location>
        <begin position="1"/>
        <end position="136"/>
    </location>
</feature>